<keyword id="KW-0456">Lyase</keyword>
<dbReference type="EC" id="4.2.1.108" evidence="1"/>
<dbReference type="EMBL" id="CP000088">
    <property type="protein sequence ID" value="AAZ54340.1"/>
    <property type="molecule type" value="Genomic_DNA"/>
</dbReference>
<dbReference type="RefSeq" id="WP_011290749.1">
    <property type="nucleotide sequence ID" value="NC_007333.1"/>
</dbReference>
<dbReference type="SMR" id="Q47T77"/>
<dbReference type="STRING" id="269800.Tfu_0302"/>
<dbReference type="DNASU" id="3579975"/>
<dbReference type="KEGG" id="tfu:Tfu_0302"/>
<dbReference type="eggNOG" id="COG1917">
    <property type="taxonomic scope" value="Bacteria"/>
</dbReference>
<dbReference type="HOGENOM" id="CLU_154525_0_0_11"/>
<dbReference type="OrthoDB" id="4406415at2"/>
<dbReference type="UniPathway" id="UPA00067">
    <property type="reaction ID" value="UER00123"/>
</dbReference>
<dbReference type="GO" id="GO:0033990">
    <property type="term" value="F:ectoine synthase activity"/>
    <property type="evidence" value="ECO:0007669"/>
    <property type="project" value="UniProtKB-EC"/>
</dbReference>
<dbReference type="GO" id="GO:0019491">
    <property type="term" value="P:ectoine biosynthetic process"/>
    <property type="evidence" value="ECO:0007669"/>
    <property type="project" value="UniProtKB-UniRule"/>
</dbReference>
<dbReference type="CDD" id="cd06978">
    <property type="entry name" value="cupin_EctC"/>
    <property type="match status" value="1"/>
</dbReference>
<dbReference type="Gene3D" id="2.60.120.10">
    <property type="entry name" value="Jelly Rolls"/>
    <property type="match status" value="1"/>
</dbReference>
<dbReference type="HAMAP" id="MF_01255">
    <property type="entry name" value="Ectoine_synth"/>
    <property type="match status" value="1"/>
</dbReference>
<dbReference type="InterPro" id="IPR010462">
    <property type="entry name" value="Ectoine_synth"/>
</dbReference>
<dbReference type="InterPro" id="IPR014710">
    <property type="entry name" value="RmlC-like_jellyroll"/>
</dbReference>
<dbReference type="InterPro" id="IPR011051">
    <property type="entry name" value="RmlC_Cupin_sf"/>
</dbReference>
<dbReference type="NCBIfam" id="NF009806">
    <property type="entry name" value="PRK13290.1"/>
    <property type="match status" value="1"/>
</dbReference>
<dbReference type="PANTHER" id="PTHR39289">
    <property type="match status" value="1"/>
</dbReference>
<dbReference type="PANTHER" id="PTHR39289:SF1">
    <property type="entry name" value="L-ECTOINE SYNTHASE"/>
    <property type="match status" value="1"/>
</dbReference>
<dbReference type="Pfam" id="PF06339">
    <property type="entry name" value="Ectoine_synth"/>
    <property type="match status" value="1"/>
</dbReference>
<dbReference type="SUPFAM" id="SSF51182">
    <property type="entry name" value="RmlC-like cupins"/>
    <property type="match status" value="1"/>
</dbReference>
<name>ECTC_THEFY</name>
<protein>
    <recommendedName>
        <fullName evidence="1">L-ectoine synthase</fullName>
        <ecNumber evidence="1">4.2.1.108</ecNumber>
    </recommendedName>
    <alternativeName>
        <fullName evidence="1">N-acetyldiaminobutyrate dehydratase</fullName>
    </alternativeName>
</protein>
<evidence type="ECO:0000255" key="1">
    <source>
        <dbReference type="HAMAP-Rule" id="MF_01255"/>
    </source>
</evidence>
<accession>Q47T77</accession>
<reference key="1">
    <citation type="journal article" date="2007" name="J. Bacteriol.">
        <title>Genome sequence and analysis of the soil cellulolytic actinomycete Thermobifida fusca YX.</title>
        <authorList>
            <person name="Lykidis A."/>
            <person name="Mavromatis K."/>
            <person name="Ivanova N."/>
            <person name="Anderson I."/>
            <person name="Land M."/>
            <person name="DiBartolo G."/>
            <person name="Martinez M."/>
            <person name="Lapidus A."/>
            <person name="Lucas S."/>
            <person name="Copeland A."/>
            <person name="Richardson P."/>
            <person name="Wilson D.B."/>
            <person name="Kyrpides N."/>
        </authorList>
    </citation>
    <scope>NUCLEOTIDE SEQUENCE [LARGE SCALE GENOMIC DNA]</scope>
    <source>
        <strain>YX</strain>
    </source>
</reference>
<proteinExistence type="inferred from homology"/>
<comment type="function">
    <text evidence="1">Catalyzes the circularization of gamma-N-acetyl-alpha,gamma-diaminobutyric acid (ADABA) to ectoine (1,4,5,6-tetrahydro-2-methyl-4-pyrimidine carboxylic acid), which is an excellent osmoprotectant.</text>
</comment>
<comment type="catalytic activity">
    <reaction evidence="1">
        <text>(2S)-4-acetamido-2-aminobutanoate = L-ectoine + H2O</text>
        <dbReference type="Rhea" id="RHEA:17281"/>
        <dbReference type="ChEBI" id="CHEBI:15377"/>
        <dbReference type="ChEBI" id="CHEBI:58515"/>
        <dbReference type="ChEBI" id="CHEBI:58929"/>
        <dbReference type="EC" id="4.2.1.108"/>
    </reaction>
</comment>
<comment type="pathway">
    <text evidence="1">Amine and polyamine biosynthesis; ectoine biosynthesis; L-ectoine from L-aspartate 4-semialdehyde: step 3/3.</text>
</comment>
<comment type="similarity">
    <text evidence="1">Belongs to the ectoine synthase family.</text>
</comment>
<organism>
    <name type="scientific">Thermobifida fusca (strain YX)</name>
    <dbReference type="NCBI Taxonomy" id="269800"/>
    <lineage>
        <taxon>Bacteria</taxon>
        <taxon>Bacillati</taxon>
        <taxon>Actinomycetota</taxon>
        <taxon>Actinomycetes</taxon>
        <taxon>Streptosporangiales</taxon>
        <taxon>Nocardiopsidaceae</taxon>
        <taxon>Thermobifida</taxon>
    </lineage>
</organism>
<gene>
    <name evidence="1" type="primary">ectC</name>
    <name type="ordered locus">Tfu_0302</name>
</gene>
<feature type="chain" id="PRO_1000067240" description="L-ectoine synthase">
    <location>
        <begin position="1"/>
        <end position="134"/>
    </location>
</feature>
<sequence>MIVRSLDDINGTDADVVTENWRSRRIVLARDGVGFSFHETVLYAGTETSMWYANHIELVHCIEGEAEVTNDETGETFLITPGTLYLLNGHERHTVRPKTDFRVLCVFTPPVTGREVHDENGSYPLLTEDATDTD</sequence>